<evidence type="ECO:0000255" key="1">
    <source>
        <dbReference type="HAMAP-Rule" id="MF_00275"/>
    </source>
</evidence>
<gene>
    <name evidence="1" type="primary">kdpA</name>
    <name type="ordered locus">BPP3468</name>
</gene>
<name>KDPA_BORPA</name>
<feature type="chain" id="PRO_0000166484" description="Potassium-transporting ATPase potassium-binding subunit">
    <location>
        <begin position="1"/>
        <end position="594"/>
    </location>
</feature>
<feature type="transmembrane region" description="Helical" evidence="1">
    <location>
        <begin position="3"/>
        <end position="23"/>
    </location>
</feature>
<feature type="transmembrane region" description="Helical" evidence="1">
    <location>
        <begin position="67"/>
        <end position="87"/>
    </location>
</feature>
<feature type="transmembrane region" description="Helical" evidence="1">
    <location>
        <begin position="136"/>
        <end position="156"/>
    </location>
</feature>
<feature type="transmembrane region" description="Helical" evidence="1">
    <location>
        <begin position="179"/>
        <end position="199"/>
    </location>
</feature>
<feature type="transmembrane region" description="Helical" evidence="1">
    <location>
        <begin position="287"/>
        <end position="307"/>
    </location>
</feature>
<feature type="transmembrane region" description="Helical" evidence="1">
    <location>
        <begin position="314"/>
        <end position="334"/>
    </location>
</feature>
<feature type="transmembrane region" description="Helical" evidence="1">
    <location>
        <begin position="415"/>
        <end position="435"/>
    </location>
</feature>
<feature type="transmembrane region" description="Helical" evidence="1">
    <location>
        <begin position="453"/>
        <end position="473"/>
    </location>
</feature>
<feature type="transmembrane region" description="Helical" evidence="1">
    <location>
        <begin position="519"/>
        <end position="539"/>
    </location>
</feature>
<feature type="transmembrane region" description="Helical" evidence="1">
    <location>
        <begin position="562"/>
        <end position="582"/>
    </location>
</feature>
<accession>Q7W536</accession>
<protein>
    <recommendedName>
        <fullName evidence="1">Potassium-transporting ATPase potassium-binding subunit</fullName>
    </recommendedName>
    <alternativeName>
        <fullName evidence="1">ATP phosphohydrolase [potassium-transporting] A chain</fullName>
    </alternativeName>
    <alternativeName>
        <fullName evidence="1">Potassium-binding and translocating subunit A</fullName>
    </alternativeName>
    <alternativeName>
        <fullName evidence="1">Potassium-translocating ATPase A chain</fullName>
    </alternativeName>
</protein>
<reference key="1">
    <citation type="journal article" date="2003" name="Nat. Genet.">
        <title>Comparative analysis of the genome sequences of Bordetella pertussis, Bordetella parapertussis and Bordetella bronchiseptica.</title>
        <authorList>
            <person name="Parkhill J."/>
            <person name="Sebaihia M."/>
            <person name="Preston A."/>
            <person name="Murphy L.D."/>
            <person name="Thomson N.R."/>
            <person name="Harris D.E."/>
            <person name="Holden M.T.G."/>
            <person name="Churcher C.M."/>
            <person name="Bentley S.D."/>
            <person name="Mungall K.L."/>
            <person name="Cerdeno-Tarraga A.-M."/>
            <person name="Temple L."/>
            <person name="James K.D."/>
            <person name="Harris B."/>
            <person name="Quail M.A."/>
            <person name="Achtman M."/>
            <person name="Atkin R."/>
            <person name="Baker S."/>
            <person name="Basham D."/>
            <person name="Bason N."/>
            <person name="Cherevach I."/>
            <person name="Chillingworth T."/>
            <person name="Collins M."/>
            <person name="Cronin A."/>
            <person name="Davis P."/>
            <person name="Doggett J."/>
            <person name="Feltwell T."/>
            <person name="Goble A."/>
            <person name="Hamlin N."/>
            <person name="Hauser H."/>
            <person name="Holroyd S."/>
            <person name="Jagels K."/>
            <person name="Leather S."/>
            <person name="Moule S."/>
            <person name="Norberczak H."/>
            <person name="O'Neil S."/>
            <person name="Ormond D."/>
            <person name="Price C."/>
            <person name="Rabbinowitsch E."/>
            <person name="Rutter S."/>
            <person name="Sanders M."/>
            <person name="Saunders D."/>
            <person name="Seeger K."/>
            <person name="Sharp S."/>
            <person name="Simmonds M."/>
            <person name="Skelton J."/>
            <person name="Squares R."/>
            <person name="Squares S."/>
            <person name="Stevens K."/>
            <person name="Unwin L."/>
            <person name="Whitehead S."/>
            <person name="Barrell B.G."/>
            <person name="Maskell D.J."/>
        </authorList>
    </citation>
    <scope>NUCLEOTIDE SEQUENCE [LARGE SCALE GENOMIC DNA]</scope>
    <source>
        <strain>12822 / ATCC BAA-587 / NCTC 13253</strain>
    </source>
</reference>
<sequence length="594" mass="61955">MNADFLGLLLLYLTILLCAAPLLGRHIRQAMNGERTWLTAWGQPLERGLYRLAGVDPAAEMDWRRYAVAMLVFNVLGVLAVYALQRLQGWLPLNPAGLPGVAPDSALNTAISFVTNTNWQGYAGESTMSYLTQMLALTVQNFVSAATGIAVLIALVRGLARHSAATLGNFWADLVRATLYVLLPLSFILALALVSQGVVQNLDPYVEAQTVQAQQYETARLDAQGQPMTGPAGQPLTDTVVTRVQTLPMGPVASQEAIKLLGTNGGGFFNANSAHPYENPNAWSNLLEMLAILLIPAALCWTFGEMVGSRRQGVAILAAMTVLFAGFAASAAYFEQQPTPALRQAEAALLADGGNLEGKEARFGVAATALFATVTTAASCGAVNGMHDSFSALGGVTPLLQMQLGEVIYGGVGSGLYGMLAFAILAVFIAGLMIGRTPEYLGKKIEALDMQMVALVILATPALVLAGTAVAVLADAGRAGVLNPGAHGFSEILYAMSSAANNNGSAFAGLSANTPFYNVLLGLAMWFGRYTIIVAILALAGSLAAKPRLPASVGGMPTTGPLFVALLVGAVLLVGALTYVPALALGPVAEHLQP</sequence>
<comment type="function">
    <text evidence="1">Part of the high-affinity ATP-driven potassium transport (or Kdp) system, which catalyzes the hydrolysis of ATP coupled with the electrogenic transport of potassium into the cytoplasm. This subunit binds the periplasmic potassium ions and delivers the ions to the membrane domain of KdpB through an intramembrane tunnel.</text>
</comment>
<comment type="subunit">
    <text evidence="1">The system is composed of three essential subunits: KdpA, KdpB and KdpC.</text>
</comment>
<comment type="subcellular location">
    <subcellularLocation>
        <location evidence="1">Cell inner membrane</location>
        <topology evidence="1">Multi-pass membrane protein</topology>
    </subcellularLocation>
</comment>
<comment type="similarity">
    <text evidence="1">Belongs to the KdpA family.</text>
</comment>
<keyword id="KW-0997">Cell inner membrane</keyword>
<keyword id="KW-1003">Cell membrane</keyword>
<keyword id="KW-0406">Ion transport</keyword>
<keyword id="KW-0472">Membrane</keyword>
<keyword id="KW-0630">Potassium</keyword>
<keyword id="KW-0633">Potassium transport</keyword>
<keyword id="KW-0812">Transmembrane</keyword>
<keyword id="KW-1133">Transmembrane helix</keyword>
<keyword id="KW-0813">Transport</keyword>
<dbReference type="EMBL" id="BX640433">
    <property type="protein sequence ID" value="CAE38752.1"/>
    <property type="molecule type" value="Genomic_DNA"/>
</dbReference>
<dbReference type="RefSeq" id="WP_010929075.1">
    <property type="nucleotide sequence ID" value="NC_002928.3"/>
</dbReference>
<dbReference type="SMR" id="Q7W536"/>
<dbReference type="GeneID" id="93205254"/>
<dbReference type="KEGG" id="bpa:BPP3468"/>
<dbReference type="HOGENOM" id="CLU_018614_3_0_4"/>
<dbReference type="Proteomes" id="UP000001421">
    <property type="component" value="Chromosome"/>
</dbReference>
<dbReference type="GO" id="GO:0005886">
    <property type="term" value="C:plasma membrane"/>
    <property type="evidence" value="ECO:0007669"/>
    <property type="project" value="UniProtKB-SubCell"/>
</dbReference>
<dbReference type="GO" id="GO:0008556">
    <property type="term" value="F:P-type potassium transmembrane transporter activity"/>
    <property type="evidence" value="ECO:0007669"/>
    <property type="project" value="InterPro"/>
</dbReference>
<dbReference type="GO" id="GO:0030955">
    <property type="term" value="F:potassium ion binding"/>
    <property type="evidence" value="ECO:0007669"/>
    <property type="project" value="UniProtKB-UniRule"/>
</dbReference>
<dbReference type="HAMAP" id="MF_00275">
    <property type="entry name" value="KdpA"/>
    <property type="match status" value="1"/>
</dbReference>
<dbReference type="InterPro" id="IPR004623">
    <property type="entry name" value="KdpA"/>
</dbReference>
<dbReference type="NCBIfam" id="TIGR00680">
    <property type="entry name" value="kdpA"/>
    <property type="match status" value="1"/>
</dbReference>
<dbReference type="PANTHER" id="PTHR30607">
    <property type="entry name" value="POTASSIUM-TRANSPORTING ATPASE A CHAIN"/>
    <property type="match status" value="1"/>
</dbReference>
<dbReference type="PANTHER" id="PTHR30607:SF2">
    <property type="entry name" value="POTASSIUM-TRANSPORTING ATPASE POTASSIUM-BINDING SUBUNIT"/>
    <property type="match status" value="1"/>
</dbReference>
<dbReference type="Pfam" id="PF03814">
    <property type="entry name" value="KdpA"/>
    <property type="match status" value="1"/>
</dbReference>
<dbReference type="PIRSF" id="PIRSF001294">
    <property type="entry name" value="K_ATPaseA"/>
    <property type="match status" value="1"/>
</dbReference>
<proteinExistence type="inferred from homology"/>
<organism>
    <name type="scientific">Bordetella parapertussis (strain 12822 / ATCC BAA-587 / NCTC 13253)</name>
    <dbReference type="NCBI Taxonomy" id="257311"/>
    <lineage>
        <taxon>Bacteria</taxon>
        <taxon>Pseudomonadati</taxon>
        <taxon>Pseudomonadota</taxon>
        <taxon>Betaproteobacteria</taxon>
        <taxon>Burkholderiales</taxon>
        <taxon>Alcaligenaceae</taxon>
        <taxon>Bordetella</taxon>
    </lineage>
</organism>